<reference key="1">
    <citation type="journal article" date="1990" name="Gene">
        <title>Molecular cloning and characterization of a late Tipula iridescent virus gene.</title>
        <authorList>
            <person name="Home W.A."/>
            <person name="Tajbakhsh S."/>
            <person name="Seligy V.L."/>
        </authorList>
    </citation>
    <scope>NUCLEOTIDE SEQUENCE [GENOMIC DNA]</scope>
    <scope>FUNCTION</scope>
</reference>
<protein>
    <recommendedName>
        <fullName>Putative ubiquitin thioesterase L96</fullName>
        <ecNumber evidence="2">3.4.19.12</ecNumber>
    </recommendedName>
</protein>
<evidence type="ECO:0000250" key="1"/>
<evidence type="ECO:0000250" key="2">
    <source>
        <dbReference type="UniProtKB" id="Q5VVQ6"/>
    </source>
</evidence>
<evidence type="ECO:0000250" key="3">
    <source>
        <dbReference type="UniProtKB" id="Q96FW1"/>
    </source>
</evidence>
<evidence type="ECO:0000255" key="4">
    <source>
        <dbReference type="PROSITE-ProRule" id="PRU00139"/>
    </source>
</evidence>
<evidence type="ECO:0000256" key="5">
    <source>
        <dbReference type="SAM" id="MobiDB-lite"/>
    </source>
</evidence>
<evidence type="ECO:0000269" key="6">
    <source>
    </source>
</evidence>
<accession>P22856</accession>
<proteinExistence type="inferred from homology"/>
<organism>
    <name type="scientific">Tipula iridescent virus</name>
    <name type="common">TIV</name>
    <name type="synonym">Insect iridescent virus type 1</name>
    <dbReference type="NCBI Taxonomy" id="10490"/>
    <lineage>
        <taxon>Viruses</taxon>
        <taxon>Varidnaviria</taxon>
        <taxon>Bamfordvirae</taxon>
        <taxon>Nucleocytoviricota</taxon>
        <taxon>Megaviricetes</taxon>
        <taxon>Pimascovirales</taxon>
        <taxon>Iridoviridae</taxon>
        <taxon>Betairidovirinae</taxon>
        <taxon>Iridovirus</taxon>
        <taxon>Invertebrate iridescent virus 1</taxon>
    </lineage>
</organism>
<keyword id="KW-0238">DNA-binding</keyword>
<keyword id="KW-0378">Hydrolase</keyword>
<keyword id="KW-0645">Protease</keyword>
<keyword id="KW-0677">Repeat</keyword>
<keyword id="KW-0788">Thiol protease</keyword>
<keyword id="KW-0833">Ubl conjugation pathway</keyword>
<keyword id="KW-0231">Viral genome packaging</keyword>
<keyword id="KW-1188">Viral release from host cell</keyword>
<comment type="function">
    <text evidence="1 6">Hydrolase that can remove conjugated ubiquitin from proteins and may therefore play an important regulatory role at the level of protein turnover by preventing degradation (By similarity). May be involved in TIV genomic DNA packaging in a manner related to the Gag polyproteins of the mammalian viruses.</text>
</comment>
<comment type="catalytic activity">
    <reaction evidence="2">
        <text>Thiol-dependent hydrolysis of ester, thioester, amide, peptide and isopeptide bonds formed by the C-terminal Gly of ubiquitin (a 76-residue protein attached to proteins as an intracellular targeting signal).</text>
        <dbReference type="EC" id="3.4.19.12"/>
    </reaction>
</comment>
<dbReference type="EC" id="3.4.19.12" evidence="2"/>
<dbReference type="EMBL" id="M62953">
    <property type="protein sequence ID" value="AAA47919.1"/>
    <property type="molecule type" value="Genomic_DNA"/>
</dbReference>
<dbReference type="PIR" id="JH0225">
    <property type="entry name" value="JH0225"/>
</dbReference>
<dbReference type="SMR" id="P22856"/>
<dbReference type="GO" id="GO:0004843">
    <property type="term" value="F:cysteine-type deubiquitinase activity"/>
    <property type="evidence" value="ECO:0007669"/>
    <property type="project" value="UniProtKB-EC"/>
</dbReference>
<dbReference type="GO" id="GO:0003677">
    <property type="term" value="F:DNA binding"/>
    <property type="evidence" value="ECO:0007669"/>
    <property type="project" value="UniProtKB-KW"/>
</dbReference>
<dbReference type="GO" id="GO:0006353">
    <property type="term" value="P:DNA-templated transcription termination"/>
    <property type="evidence" value="ECO:0007669"/>
    <property type="project" value="InterPro"/>
</dbReference>
<dbReference type="GO" id="GO:0016579">
    <property type="term" value="P:protein deubiquitination"/>
    <property type="evidence" value="ECO:0007669"/>
    <property type="project" value="TreeGrafter"/>
</dbReference>
<dbReference type="GO" id="GO:0006508">
    <property type="term" value="P:proteolysis"/>
    <property type="evidence" value="ECO:0007669"/>
    <property type="project" value="UniProtKB-KW"/>
</dbReference>
<dbReference type="CDD" id="cd22758">
    <property type="entry name" value="OTU_232R-like"/>
    <property type="match status" value="1"/>
</dbReference>
<dbReference type="Gene3D" id="3.90.70.80">
    <property type="match status" value="1"/>
</dbReference>
<dbReference type="InterPro" id="IPR003323">
    <property type="entry name" value="OTU_dom"/>
</dbReference>
<dbReference type="InterPro" id="IPR038765">
    <property type="entry name" value="Papain-like_cys_pep_sf"/>
</dbReference>
<dbReference type="InterPro" id="IPR050704">
    <property type="entry name" value="Peptidase_C85-like"/>
</dbReference>
<dbReference type="InterPro" id="IPR011112">
    <property type="entry name" value="Rho-like_N"/>
</dbReference>
<dbReference type="PANTHER" id="PTHR12419">
    <property type="entry name" value="OTU DOMAIN CONTAINING PROTEIN"/>
    <property type="match status" value="1"/>
</dbReference>
<dbReference type="PANTHER" id="PTHR12419:SF11">
    <property type="entry name" value="OTU DOMAIN-CONTAINING PROTEIN DDB_G0284757"/>
    <property type="match status" value="1"/>
</dbReference>
<dbReference type="Pfam" id="PF02338">
    <property type="entry name" value="OTU"/>
    <property type="match status" value="1"/>
</dbReference>
<dbReference type="PRINTS" id="PR01217">
    <property type="entry name" value="PRICHEXTENSN"/>
</dbReference>
<dbReference type="SMART" id="SM00959">
    <property type="entry name" value="Rho_N"/>
    <property type="match status" value="3"/>
</dbReference>
<dbReference type="SUPFAM" id="SSF54001">
    <property type="entry name" value="Cysteine proteinases"/>
    <property type="match status" value="1"/>
</dbReference>
<dbReference type="PROSITE" id="PS50802">
    <property type="entry name" value="OTU"/>
    <property type="match status" value="1"/>
</dbReference>
<gene>
    <name type="ORF">L96</name>
</gene>
<feature type="chain" id="PRO_0000222389" description="Putative ubiquitin thioesterase L96">
    <location>
        <begin position="1"/>
        <end position="867"/>
    </location>
</feature>
<feature type="domain" description="OTU" evidence="4">
    <location>
        <begin position="606"/>
        <end position="745"/>
    </location>
</feature>
<feature type="region of interest" description="Disordered" evidence="5">
    <location>
        <begin position="49"/>
        <end position="73"/>
    </location>
</feature>
<feature type="region of interest" description="Disordered" evidence="5">
    <location>
        <begin position="177"/>
        <end position="204"/>
    </location>
</feature>
<feature type="region of interest" description="Disordered" evidence="5">
    <location>
        <begin position="231"/>
        <end position="271"/>
    </location>
</feature>
<feature type="region of interest" description="Disordered" evidence="5">
    <location>
        <begin position="379"/>
        <end position="591"/>
    </location>
</feature>
<feature type="compositionally biased region" description="Basic residues" evidence="5">
    <location>
        <begin position="234"/>
        <end position="258"/>
    </location>
</feature>
<feature type="compositionally biased region" description="Basic residues" evidence="5">
    <location>
        <begin position="421"/>
        <end position="430"/>
    </location>
</feature>
<feature type="compositionally biased region" description="Low complexity" evidence="5">
    <location>
        <begin position="433"/>
        <end position="462"/>
    </location>
</feature>
<feature type="compositionally biased region" description="Low complexity" evidence="5">
    <location>
        <begin position="472"/>
        <end position="551"/>
    </location>
</feature>
<feature type="compositionally biased region" description="Polar residues" evidence="5">
    <location>
        <begin position="565"/>
        <end position="575"/>
    </location>
</feature>
<feature type="compositionally biased region" description="Basic and acidic residues" evidence="5">
    <location>
        <begin position="582"/>
        <end position="591"/>
    </location>
</feature>
<feature type="active site" evidence="3">
    <location>
        <position position="614"/>
    </location>
</feature>
<feature type="active site" description="Nucleophile" evidence="2">
    <location>
        <position position="617"/>
    </location>
</feature>
<feature type="active site" evidence="2">
    <location>
        <position position="738"/>
    </location>
</feature>
<sequence>MCDIDLKTCEKSSKYKKKDIVDLGKKCGVDPYLPNGREKTRQVICTEIVNQYSTNPPSSSSESDDDEDMGKQDQDPICGISEKECNKLDNVNLLALGEYCGVDIYTPEGNLKTSKTICKSVSLKQSSPKAQKSPNKNDLINMDPANLKKLAKKLDIDWKKKDIKELQYLIAKKLNSIKSVSPSRSPSPRRSRSPSPNIQNMKKKELKALAKALGASDKKLDKMDKNQLIEYILSRKKSPSPVRKSRSPSLRQRSRSPGRSRSNSPVRPKYRAADLLGKKVVELKELAKMEGLKKWKDKTPSKMLKQDLVDFLLHVGGGGQLPKTPSPVKPSASPKTRAELALLKVPELKAMALSYGLKNFKDKTPSQLRKNDFIDFIILSTQKSQSPPPSIRSKPRSSSPKYKTKDLVTTDESDGEIVVKKITRKPKSPRRSPPASVRRSRTPSVPKSPSARPRSKSPSVRAEITDDEGETPPSSVRPKSPSVRPKSPSVRPRSKSPSVRPKSPSARPRSKSPSVRSKSPSVRPKSPSVRPKSPSVRPRSKSPSVRPKSPSVRPPPPDPSNSPSITVDPSVTPPSSVKIKKRPELPEYKGGNADRDLEILARRRGYKVIPVKGDGNCLFRAVGKSLRLNQNIKYSHEDLRAQVVTYLTSHKEFLEPYLEYVTESGDTTPQEYAKNVERYIKNISKPGTWGDFICLRVLSEILKVKFNLLILNTRNFQVISNNDTFKPLIPLGFIDDYHYTALTPLYAEPIAVLENETPTPSIAPSIRPPPSIIPSIAPSVRPSIAPSVRPSIVPATPSIVPSLKPSVVPKLTPSIAPKIPPPVFGPVKPLSSTRELLEEADKVHPYVREDISQLARAEEQILVSLGM</sequence>
<name>VL96_IRV1</name>
<organismHost>
    <name type="scientific">Tipula</name>
    <dbReference type="NCBI Taxonomy" id="41043"/>
</organismHost>